<gene>
    <name type="primary">get3</name>
    <name type="ORF">NFIA_065950</name>
</gene>
<evidence type="ECO:0000255" key="1">
    <source>
        <dbReference type="HAMAP-Rule" id="MF_03112"/>
    </source>
</evidence>
<protein>
    <recommendedName>
        <fullName evidence="1">ATPase get3</fullName>
        <ecNumber evidence="1">3.6.-.-</ecNumber>
    </recommendedName>
    <alternativeName>
        <fullName evidence="1">Arsenical pump-driving ATPase</fullName>
    </alternativeName>
    <alternativeName>
        <fullName evidence="1">Arsenite-stimulated ATPase</fullName>
    </alternativeName>
    <alternativeName>
        <fullName evidence="1">Golgi to ER traffic protein 3</fullName>
    </alternativeName>
    <alternativeName>
        <fullName evidence="1">Guided entry of tail-anchored proteins 3</fullName>
    </alternativeName>
</protein>
<accession>A1D6T7</accession>
<sequence>MSSTAVVHGDDLMEPTLQSILSQKTLRWIFVGGKGGVGKTTTSCSLAIQLAKVRKSVLLISTDPAHNLSDAFGQKFGKEARLVDGYSNLSAMEIDPNGSIQDLLASGESQGDDPMAGLGMGNMMQDLAFSIPGVDEAMSFAEVLKQVKSLSYEVIVFDTAPTGHTLRFLQFPTVLEKALAKLSQLSSQFGPMLNSILGARGGLPGGQNIDELLQKMESLRETISEVNTQFKNPDMTTFVCVCIAEFLSLYETERMIQELTSYGIDTHAIVVNQLLFPKEGSGCEQCNARRKMQKKYLEQIEELYEDFNVVRMPLLVEEVRGKEKLEKFSEMLVHPYVPPQ</sequence>
<organism>
    <name type="scientific">Neosartorya fischeri (strain ATCC 1020 / DSM 3700 / CBS 544.65 / FGSC A1164 / JCM 1740 / NRRL 181 / WB 181)</name>
    <name type="common">Aspergillus fischerianus</name>
    <dbReference type="NCBI Taxonomy" id="331117"/>
    <lineage>
        <taxon>Eukaryota</taxon>
        <taxon>Fungi</taxon>
        <taxon>Dikarya</taxon>
        <taxon>Ascomycota</taxon>
        <taxon>Pezizomycotina</taxon>
        <taxon>Eurotiomycetes</taxon>
        <taxon>Eurotiomycetidae</taxon>
        <taxon>Eurotiales</taxon>
        <taxon>Aspergillaceae</taxon>
        <taxon>Aspergillus</taxon>
        <taxon>Aspergillus subgen. Fumigati</taxon>
    </lineage>
</organism>
<proteinExistence type="inferred from homology"/>
<name>GET3_NEOFI</name>
<reference key="1">
    <citation type="journal article" date="2008" name="PLoS Genet.">
        <title>Genomic islands in the pathogenic filamentous fungus Aspergillus fumigatus.</title>
        <authorList>
            <person name="Fedorova N.D."/>
            <person name="Khaldi N."/>
            <person name="Joardar V.S."/>
            <person name="Maiti R."/>
            <person name="Amedeo P."/>
            <person name="Anderson M.J."/>
            <person name="Crabtree J."/>
            <person name="Silva J.C."/>
            <person name="Badger J.H."/>
            <person name="Albarraq A."/>
            <person name="Angiuoli S."/>
            <person name="Bussey H."/>
            <person name="Bowyer P."/>
            <person name="Cotty P.J."/>
            <person name="Dyer P.S."/>
            <person name="Egan A."/>
            <person name="Galens K."/>
            <person name="Fraser-Liggett C.M."/>
            <person name="Haas B.J."/>
            <person name="Inman J.M."/>
            <person name="Kent R."/>
            <person name="Lemieux S."/>
            <person name="Malavazi I."/>
            <person name="Orvis J."/>
            <person name="Roemer T."/>
            <person name="Ronning C.M."/>
            <person name="Sundaram J.P."/>
            <person name="Sutton G."/>
            <person name="Turner G."/>
            <person name="Venter J.C."/>
            <person name="White O.R."/>
            <person name="Whitty B.R."/>
            <person name="Youngman P."/>
            <person name="Wolfe K.H."/>
            <person name="Goldman G.H."/>
            <person name="Wortman J.R."/>
            <person name="Jiang B."/>
            <person name="Denning D.W."/>
            <person name="Nierman W.C."/>
        </authorList>
    </citation>
    <scope>NUCLEOTIDE SEQUENCE [LARGE SCALE GENOMIC DNA]</scope>
    <source>
        <strain>ATCC 1020 / DSM 3700 / CBS 544.65 / FGSC A1164 / JCM 1740 / NRRL 181 / WB 181</strain>
    </source>
</reference>
<keyword id="KW-0067">ATP-binding</keyword>
<keyword id="KW-0963">Cytoplasm</keyword>
<keyword id="KW-0256">Endoplasmic reticulum</keyword>
<keyword id="KW-0378">Hydrolase</keyword>
<keyword id="KW-0479">Metal-binding</keyword>
<keyword id="KW-0547">Nucleotide-binding</keyword>
<keyword id="KW-1185">Reference proteome</keyword>
<keyword id="KW-0813">Transport</keyword>
<keyword id="KW-0862">Zinc</keyword>
<comment type="function">
    <text evidence="1">ATPase required for the post-translational delivery of tail-anchored (TA) proteins to the endoplasmic reticulum. Recognizes and selectively binds the transmembrane domain of TA proteins in the cytosol. This complex then targets to the endoplasmic reticulum by membrane-bound receptors, where the tail-anchored protein is released for insertion. This process is regulated by ATP binding and hydrolysis. ATP binding drives the homodimer towards the closed dimer state, facilitating recognition of newly synthesized TA membrane proteins. ATP hydrolysis is required for insertion. Subsequently, the homodimer reverts towards the open dimer state, lowering its affinity for the membrane-bound receptor, and returning it to the cytosol to initiate a new round of targeting.</text>
</comment>
<comment type="subunit">
    <text evidence="1">Homodimer.</text>
</comment>
<comment type="subcellular location">
    <subcellularLocation>
        <location evidence="1">Cytoplasm</location>
    </subcellularLocation>
    <subcellularLocation>
        <location evidence="1">Endoplasmic reticulum</location>
    </subcellularLocation>
</comment>
<comment type="similarity">
    <text evidence="1">Belongs to the arsA ATPase family.</text>
</comment>
<feature type="chain" id="PRO_0000388215" description="ATPase get3">
    <location>
        <begin position="1"/>
        <end position="340"/>
    </location>
</feature>
<feature type="active site" evidence="1">
    <location>
        <position position="63"/>
    </location>
</feature>
<feature type="binding site" evidence="1">
    <location>
        <begin position="34"/>
        <end position="41"/>
    </location>
    <ligand>
        <name>ATP</name>
        <dbReference type="ChEBI" id="CHEBI:30616"/>
    </ligand>
</feature>
<feature type="binding site" evidence="1">
    <location>
        <position position="245"/>
    </location>
    <ligand>
        <name>ATP</name>
        <dbReference type="ChEBI" id="CHEBI:30616"/>
    </ligand>
</feature>
<feature type="binding site" evidence="1">
    <location>
        <position position="272"/>
    </location>
    <ligand>
        <name>ATP</name>
        <dbReference type="ChEBI" id="CHEBI:30616"/>
    </ligand>
</feature>
<feature type="binding site" evidence="1">
    <location>
        <position position="283"/>
    </location>
    <ligand>
        <name>Zn(2+)</name>
        <dbReference type="ChEBI" id="CHEBI:29105"/>
        <note>ligand shared between dimeric partners</note>
    </ligand>
</feature>
<feature type="binding site" evidence="1">
    <location>
        <position position="286"/>
    </location>
    <ligand>
        <name>Zn(2+)</name>
        <dbReference type="ChEBI" id="CHEBI:29105"/>
        <note>ligand shared between dimeric partners</note>
    </ligand>
</feature>
<dbReference type="EC" id="3.6.-.-" evidence="1"/>
<dbReference type="EMBL" id="DS027690">
    <property type="protein sequence ID" value="EAW21431.1"/>
    <property type="molecule type" value="Genomic_DNA"/>
</dbReference>
<dbReference type="RefSeq" id="XP_001263328.1">
    <property type="nucleotide sequence ID" value="XM_001263327.1"/>
</dbReference>
<dbReference type="SMR" id="A1D6T7"/>
<dbReference type="STRING" id="331117.A1D6T7"/>
<dbReference type="EnsemblFungi" id="EAW21431">
    <property type="protein sequence ID" value="EAW21431"/>
    <property type="gene ID" value="NFIA_065950"/>
</dbReference>
<dbReference type="GeneID" id="4589943"/>
<dbReference type="KEGG" id="nfi:NFIA_065950"/>
<dbReference type="VEuPathDB" id="FungiDB:NFIA_065950"/>
<dbReference type="eggNOG" id="KOG2825">
    <property type="taxonomic scope" value="Eukaryota"/>
</dbReference>
<dbReference type="HOGENOM" id="CLU_040761_0_0_1"/>
<dbReference type="OMA" id="MDAPYEF"/>
<dbReference type="OrthoDB" id="1770at2759"/>
<dbReference type="Proteomes" id="UP000006702">
    <property type="component" value="Unassembled WGS sequence"/>
</dbReference>
<dbReference type="GO" id="GO:0043529">
    <property type="term" value="C:GET complex"/>
    <property type="evidence" value="ECO:0007669"/>
    <property type="project" value="EnsemblFungi"/>
</dbReference>
<dbReference type="GO" id="GO:0005524">
    <property type="term" value="F:ATP binding"/>
    <property type="evidence" value="ECO:0007669"/>
    <property type="project" value="UniProtKB-UniRule"/>
</dbReference>
<dbReference type="GO" id="GO:0016887">
    <property type="term" value="F:ATP hydrolysis activity"/>
    <property type="evidence" value="ECO:0007669"/>
    <property type="project" value="EnsemblFungi"/>
</dbReference>
<dbReference type="GO" id="GO:0005085">
    <property type="term" value="F:guanyl-nucleotide exchange factor activity"/>
    <property type="evidence" value="ECO:0007669"/>
    <property type="project" value="EnsemblFungi"/>
</dbReference>
<dbReference type="GO" id="GO:0042802">
    <property type="term" value="F:identical protein binding"/>
    <property type="evidence" value="ECO:0007669"/>
    <property type="project" value="EnsemblFungi"/>
</dbReference>
<dbReference type="GO" id="GO:0046872">
    <property type="term" value="F:metal ion binding"/>
    <property type="evidence" value="ECO:0007669"/>
    <property type="project" value="UniProtKB-KW"/>
</dbReference>
<dbReference type="GO" id="GO:0044183">
    <property type="term" value="F:protein folding chaperone"/>
    <property type="evidence" value="ECO:0007669"/>
    <property type="project" value="EnsemblFungi"/>
</dbReference>
<dbReference type="GO" id="GO:0051082">
    <property type="term" value="F:unfolded protein binding"/>
    <property type="evidence" value="ECO:0007669"/>
    <property type="project" value="EnsemblFungi"/>
</dbReference>
<dbReference type="GO" id="GO:0034599">
    <property type="term" value="P:cellular response to oxidative stress"/>
    <property type="evidence" value="ECO:0007669"/>
    <property type="project" value="EnsemblFungi"/>
</dbReference>
<dbReference type="GO" id="GO:0000750">
    <property type="term" value="P:pheromone-dependent signal transduction involved in conjugation with cellular fusion"/>
    <property type="evidence" value="ECO:0007669"/>
    <property type="project" value="EnsemblFungi"/>
</dbReference>
<dbReference type="GO" id="GO:0006620">
    <property type="term" value="P:post-translational protein targeting to endoplasmic reticulum membrane"/>
    <property type="evidence" value="ECO:0007669"/>
    <property type="project" value="EnsemblFungi"/>
</dbReference>
<dbReference type="GO" id="GO:0009408">
    <property type="term" value="P:response to heat"/>
    <property type="evidence" value="ECO:0007669"/>
    <property type="project" value="EnsemblFungi"/>
</dbReference>
<dbReference type="GO" id="GO:0010038">
    <property type="term" value="P:response to metal ion"/>
    <property type="evidence" value="ECO:0007669"/>
    <property type="project" value="EnsemblFungi"/>
</dbReference>
<dbReference type="GO" id="GO:0006890">
    <property type="term" value="P:retrograde vesicle-mediated transport, Golgi to endoplasmic reticulum"/>
    <property type="evidence" value="ECO:0007669"/>
    <property type="project" value="EnsemblFungi"/>
</dbReference>
<dbReference type="GO" id="GO:0071816">
    <property type="term" value="P:tail-anchored membrane protein insertion into ER membrane"/>
    <property type="evidence" value="ECO:0007669"/>
    <property type="project" value="EnsemblFungi"/>
</dbReference>
<dbReference type="CDD" id="cd02035">
    <property type="entry name" value="ArsA"/>
    <property type="match status" value="1"/>
</dbReference>
<dbReference type="FunFam" id="3.40.50.300:FF:000235">
    <property type="entry name" value="ATPase ASNA1"/>
    <property type="match status" value="1"/>
</dbReference>
<dbReference type="Gene3D" id="3.40.50.300">
    <property type="entry name" value="P-loop containing nucleotide triphosphate hydrolases"/>
    <property type="match status" value="1"/>
</dbReference>
<dbReference type="HAMAP" id="MF_03112">
    <property type="entry name" value="Asna1_Get3"/>
    <property type="match status" value="1"/>
</dbReference>
<dbReference type="InterPro" id="IPR025723">
    <property type="entry name" value="Anion-transp_ATPase-like_dom"/>
</dbReference>
<dbReference type="InterPro" id="IPR016300">
    <property type="entry name" value="ATPase_ArsA/GET3"/>
</dbReference>
<dbReference type="InterPro" id="IPR027542">
    <property type="entry name" value="ATPase_ArsA/GET3_euk"/>
</dbReference>
<dbReference type="InterPro" id="IPR027417">
    <property type="entry name" value="P-loop_NTPase"/>
</dbReference>
<dbReference type="NCBIfam" id="TIGR00345">
    <property type="entry name" value="GET3_arsA_TRC40"/>
    <property type="match status" value="1"/>
</dbReference>
<dbReference type="PANTHER" id="PTHR10803">
    <property type="entry name" value="ARSENICAL PUMP-DRIVING ATPASE ARSENITE-TRANSLOCATING ATPASE"/>
    <property type="match status" value="1"/>
</dbReference>
<dbReference type="PANTHER" id="PTHR10803:SF3">
    <property type="entry name" value="ATPASE GET3"/>
    <property type="match status" value="1"/>
</dbReference>
<dbReference type="Pfam" id="PF02374">
    <property type="entry name" value="ArsA_ATPase"/>
    <property type="match status" value="1"/>
</dbReference>
<dbReference type="SUPFAM" id="SSF52540">
    <property type="entry name" value="P-loop containing nucleoside triphosphate hydrolases"/>
    <property type="match status" value="1"/>
</dbReference>